<dbReference type="EC" id="2.1.2.3" evidence="1"/>
<dbReference type="EC" id="3.5.4.10" evidence="1"/>
<dbReference type="EMBL" id="CP000526">
    <property type="protein sequence ID" value="ABM49561.1"/>
    <property type="molecule type" value="Genomic_DNA"/>
</dbReference>
<dbReference type="RefSeq" id="WP_004194285.1">
    <property type="nucleotide sequence ID" value="NC_008785.1"/>
</dbReference>
<dbReference type="SMR" id="A1V068"/>
<dbReference type="GeneID" id="92980050"/>
<dbReference type="KEGG" id="bmv:BMASAVP1_A0269"/>
<dbReference type="HOGENOM" id="CLU_016316_5_2_4"/>
<dbReference type="UniPathway" id="UPA00074">
    <property type="reaction ID" value="UER00133"/>
</dbReference>
<dbReference type="UniPathway" id="UPA00074">
    <property type="reaction ID" value="UER00135"/>
</dbReference>
<dbReference type="GO" id="GO:0005829">
    <property type="term" value="C:cytosol"/>
    <property type="evidence" value="ECO:0007669"/>
    <property type="project" value="TreeGrafter"/>
</dbReference>
<dbReference type="GO" id="GO:0003937">
    <property type="term" value="F:IMP cyclohydrolase activity"/>
    <property type="evidence" value="ECO:0007669"/>
    <property type="project" value="UniProtKB-UniRule"/>
</dbReference>
<dbReference type="GO" id="GO:0004643">
    <property type="term" value="F:phosphoribosylaminoimidazolecarboxamide formyltransferase activity"/>
    <property type="evidence" value="ECO:0007669"/>
    <property type="project" value="UniProtKB-UniRule"/>
</dbReference>
<dbReference type="GO" id="GO:0006189">
    <property type="term" value="P:'de novo' IMP biosynthetic process"/>
    <property type="evidence" value="ECO:0007669"/>
    <property type="project" value="UniProtKB-UniRule"/>
</dbReference>
<dbReference type="CDD" id="cd01421">
    <property type="entry name" value="IMPCH"/>
    <property type="match status" value="1"/>
</dbReference>
<dbReference type="FunFam" id="3.40.140.20:FF:000001">
    <property type="entry name" value="Bifunctional purine biosynthesis protein PurH"/>
    <property type="match status" value="1"/>
</dbReference>
<dbReference type="FunFam" id="3.40.140.20:FF:000002">
    <property type="entry name" value="Bifunctional purine biosynthesis protein PurH"/>
    <property type="match status" value="1"/>
</dbReference>
<dbReference type="FunFam" id="3.40.50.1380:FF:000001">
    <property type="entry name" value="Bifunctional purine biosynthesis protein PurH"/>
    <property type="match status" value="1"/>
</dbReference>
<dbReference type="Gene3D" id="3.40.140.20">
    <property type="match status" value="2"/>
</dbReference>
<dbReference type="Gene3D" id="3.40.50.1380">
    <property type="entry name" value="Methylglyoxal synthase-like domain"/>
    <property type="match status" value="1"/>
</dbReference>
<dbReference type="HAMAP" id="MF_00139">
    <property type="entry name" value="PurH"/>
    <property type="match status" value="1"/>
</dbReference>
<dbReference type="InterPro" id="IPR024051">
    <property type="entry name" value="AICAR_Tfase_dup_dom_sf"/>
</dbReference>
<dbReference type="InterPro" id="IPR016193">
    <property type="entry name" value="Cytidine_deaminase-like"/>
</dbReference>
<dbReference type="InterPro" id="IPR011607">
    <property type="entry name" value="MGS-like_dom"/>
</dbReference>
<dbReference type="InterPro" id="IPR036914">
    <property type="entry name" value="MGS-like_dom_sf"/>
</dbReference>
<dbReference type="InterPro" id="IPR002695">
    <property type="entry name" value="PurH-like"/>
</dbReference>
<dbReference type="NCBIfam" id="NF002049">
    <property type="entry name" value="PRK00881.1"/>
    <property type="match status" value="1"/>
</dbReference>
<dbReference type="NCBIfam" id="TIGR00355">
    <property type="entry name" value="purH"/>
    <property type="match status" value="1"/>
</dbReference>
<dbReference type="PANTHER" id="PTHR11692:SF0">
    <property type="entry name" value="BIFUNCTIONAL PURINE BIOSYNTHESIS PROTEIN ATIC"/>
    <property type="match status" value="1"/>
</dbReference>
<dbReference type="PANTHER" id="PTHR11692">
    <property type="entry name" value="BIFUNCTIONAL PURINE BIOSYNTHESIS PROTEIN PURH"/>
    <property type="match status" value="1"/>
</dbReference>
<dbReference type="Pfam" id="PF01808">
    <property type="entry name" value="AICARFT_IMPCHas"/>
    <property type="match status" value="1"/>
</dbReference>
<dbReference type="Pfam" id="PF02142">
    <property type="entry name" value="MGS"/>
    <property type="match status" value="1"/>
</dbReference>
<dbReference type="PIRSF" id="PIRSF000414">
    <property type="entry name" value="AICARFT_IMPCHas"/>
    <property type="match status" value="1"/>
</dbReference>
<dbReference type="SMART" id="SM00798">
    <property type="entry name" value="AICARFT_IMPCHas"/>
    <property type="match status" value="1"/>
</dbReference>
<dbReference type="SMART" id="SM00851">
    <property type="entry name" value="MGS"/>
    <property type="match status" value="1"/>
</dbReference>
<dbReference type="SUPFAM" id="SSF53927">
    <property type="entry name" value="Cytidine deaminase-like"/>
    <property type="match status" value="1"/>
</dbReference>
<dbReference type="SUPFAM" id="SSF52335">
    <property type="entry name" value="Methylglyoxal synthase-like"/>
    <property type="match status" value="1"/>
</dbReference>
<dbReference type="PROSITE" id="PS51855">
    <property type="entry name" value="MGS"/>
    <property type="match status" value="1"/>
</dbReference>
<organism>
    <name type="scientific">Burkholderia mallei (strain SAVP1)</name>
    <dbReference type="NCBI Taxonomy" id="320388"/>
    <lineage>
        <taxon>Bacteria</taxon>
        <taxon>Pseudomonadati</taxon>
        <taxon>Pseudomonadota</taxon>
        <taxon>Betaproteobacteria</taxon>
        <taxon>Burkholderiales</taxon>
        <taxon>Burkholderiaceae</taxon>
        <taxon>Burkholderia</taxon>
        <taxon>pseudomallei group</taxon>
    </lineage>
</organism>
<keyword id="KW-0378">Hydrolase</keyword>
<keyword id="KW-0511">Multifunctional enzyme</keyword>
<keyword id="KW-0658">Purine biosynthesis</keyword>
<keyword id="KW-0808">Transferase</keyword>
<name>PUR9_BURMS</name>
<gene>
    <name evidence="1" type="primary">purH</name>
    <name type="ordered locus">BMASAVP1_A0269</name>
</gene>
<reference key="1">
    <citation type="journal article" date="2010" name="Genome Biol. Evol.">
        <title>Continuing evolution of Burkholderia mallei through genome reduction and large-scale rearrangements.</title>
        <authorList>
            <person name="Losada L."/>
            <person name="Ronning C.M."/>
            <person name="DeShazer D."/>
            <person name="Woods D."/>
            <person name="Fedorova N."/>
            <person name="Kim H.S."/>
            <person name="Shabalina S.A."/>
            <person name="Pearson T.R."/>
            <person name="Brinkac L."/>
            <person name="Tan P."/>
            <person name="Nandi T."/>
            <person name="Crabtree J."/>
            <person name="Badger J."/>
            <person name="Beckstrom-Sternberg S."/>
            <person name="Saqib M."/>
            <person name="Schutzer S.E."/>
            <person name="Keim P."/>
            <person name="Nierman W.C."/>
        </authorList>
    </citation>
    <scope>NUCLEOTIDE SEQUENCE [LARGE SCALE GENOMIC DNA]</scope>
    <source>
        <strain>SAVP1</strain>
    </source>
</reference>
<accession>A1V068</accession>
<comment type="catalytic activity">
    <reaction evidence="1">
        <text>(6R)-10-formyltetrahydrofolate + 5-amino-1-(5-phospho-beta-D-ribosyl)imidazole-4-carboxamide = 5-formamido-1-(5-phospho-D-ribosyl)imidazole-4-carboxamide + (6S)-5,6,7,8-tetrahydrofolate</text>
        <dbReference type="Rhea" id="RHEA:22192"/>
        <dbReference type="ChEBI" id="CHEBI:57453"/>
        <dbReference type="ChEBI" id="CHEBI:58467"/>
        <dbReference type="ChEBI" id="CHEBI:58475"/>
        <dbReference type="ChEBI" id="CHEBI:195366"/>
        <dbReference type="EC" id="2.1.2.3"/>
    </reaction>
</comment>
<comment type="catalytic activity">
    <reaction evidence="1">
        <text>IMP + H2O = 5-formamido-1-(5-phospho-D-ribosyl)imidazole-4-carboxamide</text>
        <dbReference type="Rhea" id="RHEA:18445"/>
        <dbReference type="ChEBI" id="CHEBI:15377"/>
        <dbReference type="ChEBI" id="CHEBI:58053"/>
        <dbReference type="ChEBI" id="CHEBI:58467"/>
        <dbReference type="EC" id="3.5.4.10"/>
    </reaction>
</comment>
<comment type="pathway">
    <text evidence="1">Purine metabolism; IMP biosynthesis via de novo pathway; 5-formamido-1-(5-phospho-D-ribosyl)imidazole-4-carboxamide from 5-amino-1-(5-phospho-D-ribosyl)imidazole-4-carboxamide (10-formyl THF route): step 1/1.</text>
</comment>
<comment type="pathway">
    <text evidence="1">Purine metabolism; IMP biosynthesis via de novo pathway; IMP from 5-formamido-1-(5-phospho-D-ribosyl)imidazole-4-carboxamide: step 1/1.</text>
</comment>
<comment type="domain">
    <text evidence="1">The IMP cyclohydrolase activity resides in the N-terminal region.</text>
</comment>
<comment type="similarity">
    <text evidence="1">Belongs to the PurH family.</text>
</comment>
<evidence type="ECO:0000255" key="1">
    <source>
        <dbReference type="HAMAP-Rule" id="MF_00139"/>
    </source>
</evidence>
<evidence type="ECO:0000255" key="2">
    <source>
        <dbReference type="PROSITE-ProRule" id="PRU01202"/>
    </source>
</evidence>
<sequence length="521" mass="55458">MIKQALISVSDKTGIVDFAKALSALGVKLLSTGGTAKLLADAGLPVTEVADYTGFPEMLDGRVKTLHPKVHGGILARRDLPEHMQALEAHGIPTIDLLVVNLYPFVQTIAKDDCTLADAIENIDIGGPTMLRSAAKNHRDVTVVVDPADYAVVLDEMKANGNTLGYKTNFRLATKVFAHTAQYDGAITNYLTSLGDDLQHGSRSAYPATLNLAFDKVQDLRYGENPHQSAAFYRDVATPAGALANYRQLQGKELSYNNIADSDAAWECVKTFDAPACVIIKHANPCGVAVGADAGEAYAKAFQTDPTSAFGGIIAFNREVDEAAAQAVAKQFVEVLIAPSFSDAAKQVFAAKQNVRLLEIALGEGHNAFDLKRVGGGLLVQSLDSKNVQPRELRVVTKRHPTPKEMDDLLFAWRVAKYVKSNAIVFCGNGMTLGVGAGQMSRVDSARIASIKAQNAGLTLAGSAVASDAFFPFRDGLDVVVAAGATCVIQPGGSVRDDEVIAAADEHNIAMVVTGVRHFRH</sequence>
<proteinExistence type="inferred from homology"/>
<protein>
    <recommendedName>
        <fullName evidence="1">Bifunctional purine biosynthesis protein PurH</fullName>
    </recommendedName>
    <domain>
        <recommendedName>
            <fullName evidence="1">Phosphoribosylaminoimidazolecarboxamide formyltransferase</fullName>
            <ecNumber evidence="1">2.1.2.3</ecNumber>
        </recommendedName>
        <alternativeName>
            <fullName evidence="1">AICAR transformylase</fullName>
        </alternativeName>
    </domain>
    <domain>
        <recommendedName>
            <fullName evidence="1">IMP cyclohydrolase</fullName>
            <ecNumber evidence="1">3.5.4.10</ecNumber>
        </recommendedName>
        <alternativeName>
            <fullName evidence="1">ATIC</fullName>
        </alternativeName>
        <alternativeName>
            <fullName evidence="1">IMP synthase</fullName>
        </alternativeName>
        <alternativeName>
            <fullName evidence="1">Inosinicase</fullName>
        </alternativeName>
    </domain>
</protein>
<feature type="chain" id="PRO_1000018857" description="Bifunctional purine biosynthesis protein PurH">
    <location>
        <begin position="1"/>
        <end position="521"/>
    </location>
</feature>
<feature type="domain" description="MGS-like" evidence="2">
    <location>
        <begin position="1"/>
        <end position="145"/>
    </location>
</feature>